<name>SYC_BREBN</name>
<gene>
    <name evidence="1" type="primary">cysS</name>
    <name type="ordered locus">BBR47_01980</name>
</gene>
<organism>
    <name type="scientific">Brevibacillus brevis (strain 47 / JCM 6285 / NBRC 100599)</name>
    <dbReference type="NCBI Taxonomy" id="358681"/>
    <lineage>
        <taxon>Bacteria</taxon>
        <taxon>Bacillati</taxon>
        <taxon>Bacillota</taxon>
        <taxon>Bacilli</taxon>
        <taxon>Bacillales</taxon>
        <taxon>Paenibacillaceae</taxon>
        <taxon>Brevibacillus</taxon>
    </lineage>
</organism>
<accession>C0ZIF7</accession>
<comment type="catalytic activity">
    <reaction evidence="1">
        <text>tRNA(Cys) + L-cysteine + ATP = L-cysteinyl-tRNA(Cys) + AMP + diphosphate</text>
        <dbReference type="Rhea" id="RHEA:17773"/>
        <dbReference type="Rhea" id="RHEA-COMP:9661"/>
        <dbReference type="Rhea" id="RHEA-COMP:9679"/>
        <dbReference type="ChEBI" id="CHEBI:30616"/>
        <dbReference type="ChEBI" id="CHEBI:33019"/>
        <dbReference type="ChEBI" id="CHEBI:35235"/>
        <dbReference type="ChEBI" id="CHEBI:78442"/>
        <dbReference type="ChEBI" id="CHEBI:78517"/>
        <dbReference type="ChEBI" id="CHEBI:456215"/>
        <dbReference type="EC" id="6.1.1.16"/>
    </reaction>
</comment>
<comment type="cofactor">
    <cofactor evidence="1">
        <name>Zn(2+)</name>
        <dbReference type="ChEBI" id="CHEBI:29105"/>
    </cofactor>
    <text evidence="1">Binds 1 zinc ion per subunit.</text>
</comment>
<comment type="subunit">
    <text evidence="1">Monomer.</text>
</comment>
<comment type="subcellular location">
    <subcellularLocation>
        <location evidence="1">Cytoplasm</location>
    </subcellularLocation>
</comment>
<comment type="similarity">
    <text evidence="1">Belongs to the class-I aminoacyl-tRNA synthetase family.</text>
</comment>
<keyword id="KW-0030">Aminoacyl-tRNA synthetase</keyword>
<keyword id="KW-0067">ATP-binding</keyword>
<keyword id="KW-0963">Cytoplasm</keyword>
<keyword id="KW-0436">Ligase</keyword>
<keyword id="KW-0479">Metal-binding</keyword>
<keyword id="KW-0547">Nucleotide-binding</keyword>
<keyword id="KW-0648">Protein biosynthesis</keyword>
<keyword id="KW-1185">Reference proteome</keyword>
<keyword id="KW-0862">Zinc</keyword>
<feature type="chain" id="PRO_1000199045" description="Cysteine--tRNA ligase">
    <location>
        <begin position="1"/>
        <end position="468"/>
    </location>
</feature>
<feature type="short sequence motif" description="'HIGH' region">
    <location>
        <begin position="31"/>
        <end position="41"/>
    </location>
</feature>
<feature type="short sequence motif" description="'KMSKS' region">
    <location>
        <begin position="266"/>
        <end position="270"/>
    </location>
</feature>
<feature type="binding site" evidence="1">
    <location>
        <position position="29"/>
    </location>
    <ligand>
        <name>Zn(2+)</name>
        <dbReference type="ChEBI" id="CHEBI:29105"/>
    </ligand>
</feature>
<feature type="binding site" evidence="1">
    <location>
        <position position="209"/>
    </location>
    <ligand>
        <name>Zn(2+)</name>
        <dbReference type="ChEBI" id="CHEBI:29105"/>
    </ligand>
</feature>
<feature type="binding site" evidence="1">
    <location>
        <position position="234"/>
    </location>
    <ligand>
        <name>Zn(2+)</name>
        <dbReference type="ChEBI" id="CHEBI:29105"/>
    </ligand>
</feature>
<feature type="binding site" evidence="1">
    <location>
        <position position="238"/>
    </location>
    <ligand>
        <name>Zn(2+)</name>
        <dbReference type="ChEBI" id="CHEBI:29105"/>
    </ligand>
</feature>
<feature type="binding site" evidence="1">
    <location>
        <position position="269"/>
    </location>
    <ligand>
        <name>ATP</name>
        <dbReference type="ChEBI" id="CHEBI:30616"/>
    </ligand>
</feature>
<protein>
    <recommendedName>
        <fullName evidence="1">Cysteine--tRNA ligase</fullName>
        <ecNumber evidence="1">6.1.1.16</ecNumber>
    </recommendedName>
    <alternativeName>
        <fullName evidence="1">Cysteinyl-tRNA synthetase</fullName>
        <shortName evidence="1">CysRS</shortName>
    </alternativeName>
</protein>
<evidence type="ECO:0000255" key="1">
    <source>
        <dbReference type="HAMAP-Rule" id="MF_00041"/>
    </source>
</evidence>
<dbReference type="EC" id="6.1.1.16" evidence="1"/>
<dbReference type="EMBL" id="AP008955">
    <property type="protein sequence ID" value="BAH41175.1"/>
    <property type="molecule type" value="Genomic_DNA"/>
</dbReference>
<dbReference type="RefSeq" id="WP_012683966.1">
    <property type="nucleotide sequence ID" value="NC_012491.1"/>
</dbReference>
<dbReference type="SMR" id="C0ZIF7"/>
<dbReference type="STRING" id="358681.BBR47_01980"/>
<dbReference type="KEGG" id="bbe:BBR47_01980"/>
<dbReference type="eggNOG" id="COG0215">
    <property type="taxonomic scope" value="Bacteria"/>
</dbReference>
<dbReference type="HOGENOM" id="CLU_013528_0_1_9"/>
<dbReference type="Proteomes" id="UP000001877">
    <property type="component" value="Chromosome"/>
</dbReference>
<dbReference type="GO" id="GO:0005829">
    <property type="term" value="C:cytosol"/>
    <property type="evidence" value="ECO:0007669"/>
    <property type="project" value="TreeGrafter"/>
</dbReference>
<dbReference type="GO" id="GO:0005524">
    <property type="term" value="F:ATP binding"/>
    <property type="evidence" value="ECO:0007669"/>
    <property type="project" value="UniProtKB-UniRule"/>
</dbReference>
<dbReference type="GO" id="GO:0004817">
    <property type="term" value="F:cysteine-tRNA ligase activity"/>
    <property type="evidence" value="ECO:0007669"/>
    <property type="project" value="UniProtKB-UniRule"/>
</dbReference>
<dbReference type="GO" id="GO:0008270">
    <property type="term" value="F:zinc ion binding"/>
    <property type="evidence" value="ECO:0007669"/>
    <property type="project" value="UniProtKB-UniRule"/>
</dbReference>
<dbReference type="GO" id="GO:0006423">
    <property type="term" value="P:cysteinyl-tRNA aminoacylation"/>
    <property type="evidence" value="ECO:0007669"/>
    <property type="project" value="UniProtKB-UniRule"/>
</dbReference>
<dbReference type="CDD" id="cd00672">
    <property type="entry name" value="CysRS_core"/>
    <property type="match status" value="1"/>
</dbReference>
<dbReference type="FunFam" id="3.40.50.620:FF:000009">
    <property type="entry name" value="Cysteine--tRNA ligase"/>
    <property type="match status" value="1"/>
</dbReference>
<dbReference type="Gene3D" id="1.20.120.1910">
    <property type="entry name" value="Cysteine-tRNA ligase, C-terminal anti-codon recognition domain"/>
    <property type="match status" value="1"/>
</dbReference>
<dbReference type="Gene3D" id="3.40.50.620">
    <property type="entry name" value="HUPs"/>
    <property type="match status" value="1"/>
</dbReference>
<dbReference type="HAMAP" id="MF_00041">
    <property type="entry name" value="Cys_tRNA_synth"/>
    <property type="match status" value="1"/>
</dbReference>
<dbReference type="InterPro" id="IPR015803">
    <property type="entry name" value="Cys-tRNA-ligase"/>
</dbReference>
<dbReference type="InterPro" id="IPR015273">
    <property type="entry name" value="Cys-tRNA-synt_Ia_DALR"/>
</dbReference>
<dbReference type="InterPro" id="IPR024909">
    <property type="entry name" value="Cys-tRNA/MSH_ligase"/>
</dbReference>
<dbReference type="InterPro" id="IPR056411">
    <property type="entry name" value="CysS_C"/>
</dbReference>
<dbReference type="InterPro" id="IPR014729">
    <property type="entry name" value="Rossmann-like_a/b/a_fold"/>
</dbReference>
<dbReference type="InterPro" id="IPR032678">
    <property type="entry name" value="tRNA-synt_1_cat_dom"/>
</dbReference>
<dbReference type="InterPro" id="IPR009080">
    <property type="entry name" value="tRNAsynth_Ia_anticodon-bd"/>
</dbReference>
<dbReference type="NCBIfam" id="TIGR00435">
    <property type="entry name" value="cysS"/>
    <property type="match status" value="1"/>
</dbReference>
<dbReference type="PANTHER" id="PTHR10890:SF3">
    <property type="entry name" value="CYSTEINE--TRNA LIGASE, CYTOPLASMIC"/>
    <property type="match status" value="1"/>
</dbReference>
<dbReference type="PANTHER" id="PTHR10890">
    <property type="entry name" value="CYSTEINYL-TRNA SYNTHETASE"/>
    <property type="match status" value="1"/>
</dbReference>
<dbReference type="Pfam" id="PF23493">
    <property type="entry name" value="CysS_C"/>
    <property type="match status" value="1"/>
</dbReference>
<dbReference type="Pfam" id="PF09190">
    <property type="entry name" value="DALR_2"/>
    <property type="match status" value="1"/>
</dbReference>
<dbReference type="Pfam" id="PF01406">
    <property type="entry name" value="tRNA-synt_1e"/>
    <property type="match status" value="1"/>
</dbReference>
<dbReference type="PRINTS" id="PR00983">
    <property type="entry name" value="TRNASYNTHCYS"/>
</dbReference>
<dbReference type="SMART" id="SM00840">
    <property type="entry name" value="DALR_2"/>
    <property type="match status" value="1"/>
</dbReference>
<dbReference type="SUPFAM" id="SSF47323">
    <property type="entry name" value="Anticodon-binding domain of a subclass of class I aminoacyl-tRNA synthetases"/>
    <property type="match status" value="1"/>
</dbReference>
<dbReference type="SUPFAM" id="SSF52374">
    <property type="entry name" value="Nucleotidylyl transferase"/>
    <property type="match status" value="1"/>
</dbReference>
<sequence>MGIQLTNTMTRRKEPFHTLEPGKVKMYVCGPTVYNYIHIGNARPAIVFDTLRRYLKYRGYEVTFVQNITDVDDKLIRVANQEGVTVKEVADRYTDAYNADLKSLNVSPPDIQPRVMQTIPEIIEFVQGLIEKGFAYESEGDVYFRTGRFQEYGKLSHQPLDDLQAGARVEINEKKEHPLDFVLWKAAKTGEVTWDSPWGEGRPGWHIECSAMALKFLGEEIDIHAGGTDLVFPHHENEIAQSECFTGKVFARYWLHNGMLNIDNEKMSKSLGNFLLARDLSEKFGGQLIRFFMLQGHYRNPINFSEELIEQAANGLDRITTAYTNLSHRLDTARAEEPNDQAQEQARIIGELRERFIAEMDDDINTANAITVIFDVVKEANLYLRHQNVGETEVRAYMDLLVELTEVLGLDIAEEQELLDSEIDALIEERTEARKARNFARSDEIRDLLAAKGIVLEDTPQGVRWRRK</sequence>
<proteinExistence type="inferred from homology"/>
<reference key="1">
    <citation type="submission" date="2005-03" db="EMBL/GenBank/DDBJ databases">
        <title>Brevibacillus brevis strain 47, complete genome.</title>
        <authorList>
            <person name="Hosoyama A."/>
            <person name="Yamada R."/>
            <person name="Hongo Y."/>
            <person name="Terui Y."/>
            <person name="Ankai A."/>
            <person name="Masuyama W."/>
            <person name="Sekiguchi M."/>
            <person name="Takeda T."/>
            <person name="Asano K."/>
            <person name="Ohji S."/>
            <person name="Ichikawa N."/>
            <person name="Narita S."/>
            <person name="Aoki N."/>
            <person name="Miura H."/>
            <person name="Matsushita S."/>
            <person name="Sekigawa T."/>
            <person name="Yamagata H."/>
            <person name="Yoshikawa H."/>
            <person name="Udaka S."/>
            <person name="Tanikawa S."/>
            <person name="Fujita N."/>
        </authorList>
    </citation>
    <scope>NUCLEOTIDE SEQUENCE [LARGE SCALE GENOMIC DNA]</scope>
    <source>
        <strain>47 / JCM 6285 / NBRC 100599</strain>
    </source>
</reference>